<dbReference type="EMBL" id="CT573326">
    <property type="protein sequence ID" value="CAK16817.1"/>
    <property type="molecule type" value="Genomic_DNA"/>
</dbReference>
<dbReference type="RefSeq" id="WP_011535188.1">
    <property type="nucleotide sequence ID" value="NC_008027.1"/>
</dbReference>
<dbReference type="SMR" id="Q1I6B8"/>
<dbReference type="STRING" id="384676.PSEEN4127"/>
<dbReference type="GeneID" id="32807141"/>
<dbReference type="KEGG" id="pen:PSEEN4127"/>
<dbReference type="eggNOG" id="COG2137">
    <property type="taxonomic scope" value="Bacteria"/>
</dbReference>
<dbReference type="HOGENOM" id="CLU_066607_3_2_6"/>
<dbReference type="OrthoDB" id="7066780at2"/>
<dbReference type="Proteomes" id="UP000000658">
    <property type="component" value="Chromosome"/>
</dbReference>
<dbReference type="GO" id="GO:0005737">
    <property type="term" value="C:cytoplasm"/>
    <property type="evidence" value="ECO:0007669"/>
    <property type="project" value="UniProtKB-SubCell"/>
</dbReference>
<dbReference type="GO" id="GO:0006282">
    <property type="term" value="P:regulation of DNA repair"/>
    <property type="evidence" value="ECO:0007669"/>
    <property type="project" value="UniProtKB-UniRule"/>
</dbReference>
<dbReference type="Gene3D" id="1.10.10.10">
    <property type="entry name" value="Winged helix-like DNA-binding domain superfamily/Winged helix DNA-binding domain"/>
    <property type="match status" value="3"/>
</dbReference>
<dbReference type="HAMAP" id="MF_01114">
    <property type="entry name" value="RecX"/>
    <property type="match status" value="1"/>
</dbReference>
<dbReference type="InterPro" id="IPR053926">
    <property type="entry name" value="RecX_HTH_1st"/>
</dbReference>
<dbReference type="InterPro" id="IPR053924">
    <property type="entry name" value="RecX_HTH_2nd"/>
</dbReference>
<dbReference type="InterPro" id="IPR053925">
    <property type="entry name" value="RecX_HTH_3rd"/>
</dbReference>
<dbReference type="InterPro" id="IPR003783">
    <property type="entry name" value="Regulatory_RecX"/>
</dbReference>
<dbReference type="InterPro" id="IPR036388">
    <property type="entry name" value="WH-like_DNA-bd_sf"/>
</dbReference>
<dbReference type="NCBIfam" id="NF001054">
    <property type="entry name" value="PRK00117.2-1"/>
    <property type="match status" value="1"/>
</dbReference>
<dbReference type="PANTHER" id="PTHR33602">
    <property type="entry name" value="REGULATORY PROTEIN RECX FAMILY PROTEIN"/>
    <property type="match status" value="1"/>
</dbReference>
<dbReference type="PANTHER" id="PTHR33602:SF1">
    <property type="entry name" value="REGULATORY PROTEIN RECX FAMILY PROTEIN"/>
    <property type="match status" value="1"/>
</dbReference>
<dbReference type="Pfam" id="PF21982">
    <property type="entry name" value="RecX_HTH1"/>
    <property type="match status" value="1"/>
</dbReference>
<dbReference type="Pfam" id="PF02631">
    <property type="entry name" value="RecX_HTH2"/>
    <property type="match status" value="1"/>
</dbReference>
<dbReference type="Pfam" id="PF21981">
    <property type="entry name" value="RecX_HTH3"/>
    <property type="match status" value="1"/>
</dbReference>
<comment type="function">
    <text evidence="1">Modulates RecA activity.</text>
</comment>
<comment type="subcellular location">
    <subcellularLocation>
        <location evidence="1">Cytoplasm</location>
    </subcellularLocation>
</comment>
<comment type="similarity">
    <text evidence="1">Belongs to the RecX family.</text>
</comment>
<feature type="chain" id="PRO_1000065196" description="Regulatory protein RecX">
    <location>
        <begin position="1"/>
        <end position="155"/>
    </location>
</feature>
<accession>Q1I6B8</accession>
<sequence>MSAVLDTPVAVRRTAMDLLARREHGRVELTRKLRQRGAPDELIEPALDRLAEEGLLSEARYLESFIRYRSNAGYGPARIREELGQRGLDRGDIDQSLRESEVDWAARLEEVWQRKFAGQRPQDPRSRAQQTRFLAYRGFSMEMIGRLLSGRDLYD</sequence>
<evidence type="ECO:0000255" key="1">
    <source>
        <dbReference type="HAMAP-Rule" id="MF_01114"/>
    </source>
</evidence>
<gene>
    <name evidence="1" type="primary">recX</name>
    <name type="ordered locus">PSEEN4127</name>
</gene>
<proteinExistence type="inferred from homology"/>
<keyword id="KW-0963">Cytoplasm</keyword>
<name>RECX_PSEE4</name>
<protein>
    <recommendedName>
        <fullName evidence="1">Regulatory protein RecX</fullName>
    </recommendedName>
</protein>
<organism>
    <name type="scientific">Pseudomonas entomophila (strain L48)</name>
    <dbReference type="NCBI Taxonomy" id="384676"/>
    <lineage>
        <taxon>Bacteria</taxon>
        <taxon>Pseudomonadati</taxon>
        <taxon>Pseudomonadota</taxon>
        <taxon>Gammaproteobacteria</taxon>
        <taxon>Pseudomonadales</taxon>
        <taxon>Pseudomonadaceae</taxon>
        <taxon>Pseudomonas</taxon>
    </lineage>
</organism>
<reference key="1">
    <citation type="journal article" date="2006" name="Nat. Biotechnol.">
        <title>Complete genome sequence of the entomopathogenic and metabolically versatile soil bacterium Pseudomonas entomophila.</title>
        <authorList>
            <person name="Vodovar N."/>
            <person name="Vallenet D."/>
            <person name="Cruveiller S."/>
            <person name="Rouy Z."/>
            <person name="Barbe V."/>
            <person name="Acosta C."/>
            <person name="Cattolico L."/>
            <person name="Jubin C."/>
            <person name="Lajus A."/>
            <person name="Segurens B."/>
            <person name="Vacherie B."/>
            <person name="Wincker P."/>
            <person name="Weissenbach J."/>
            <person name="Lemaitre B."/>
            <person name="Medigue C."/>
            <person name="Boccard F."/>
        </authorList>
    </citation>
    <scope>NUCLEOTIDE SEQUENCE [LARGE SCALE GENOMIC DNA]</scope>
    <source>
        <strain>L48</strain>
    </source>
</reference>